<keyword id="KW-0687">Ribonucleoprotein</keyword>
<keyword id="KW-0689">Ribosomal protein</keyword>
<keyword id="KW-0694">RNA-binding</keyword>
<keyword id="KW-0699">rRNA-binding</keyword>
<dbReference type="EMBL" id="CP000890">
    <property type="protein sequence ID" value="ABX77580.1"/>
    <property type="molecule type" value="Genomic_DNA"/>
</dbReference>
<dbReference type="SMR" id="A9NAM5"/>
<dbReference type="KEGG" id="cbs:COXBURSA331_A0338"/>
<dbReference type="HOGENOM" id="CLU_041575_5_2_6"/>
<dbReference type="GO" id="GO:1990904">
    <property type="term" value="C:ribonucleoprotein complex"/>
    <property type="evidence" value="ECO:0007669"/>
    <property type="project" value="UniProtKB-KW"/>
</dbReference>
<dbReference type="GO" id="GO:0005840">
    <property type="term" value="C:ribosome"/>
    <property type="evidence" value="ECO:0007669"/>
    <property type="project" value="UniProtKB-KW"/>
</dbReference>
<dbReference type="GO" id="GO:0019843">
    <property type="term" value="F:rRNA binding"/>
    <property type="evidence" value="ECO:0007669"/>
    <property type="project" value="UniProtKB-UniRule"/>
</dbReference>
<dbReference type="GO" id="GO:0003735">
    <property type="term" value="F:structural constituent of ribosome"/>
    <property type="evidence" value="ECO:0007669"/>
    <property type="project" value="InterPro"/>
</dbReference>
<dbReference type="GO" id="GO:0006412">
    <property type="term" value="P:translation"/>
    <property type="evidence" value="ECO:0007669"/>
    <property type="project" value="UniProtKB-UniRule"/>
</dbReference>
<dbReference type="FunFam" id="3.40.1370.10:FF:000001">
    <property type="entry name" value="50S ribosomal protein L4"/>
    <property type="match status" value="1"/>
</dbReference>
<dbReference type="Gene3D" id="3.40.1370.10">
    <property type="match status" value="1"/>
</dbReference>
<dbReference type="HAMAP" id="MF_01328_B">
    <property type="entry name" value="Ribosomal_uL4_B"/>
    <property type="match status" value="1"/>
</dbReference>
<dbReference type="InterPro" id="IPR002136">
    <property type="entry name" value="Ribosomal_uL4"/>
</dbReference>
<dbReference type="InterPro" id="IPR013005">
    <property type="entry name" value="Ribosomal_uL4-like"/>
</dbReference>
<dbReference type="InterPro" id="IPR023574">
    <property type="entry name" value="Ribosomal_uL4_dom_sf"/>
</dbReference>
<dbReference type="NCBIfam" id="TIGR03953">
    <property type="entry name" value="rplD_bact"/>
    <property type="match status" value="1"/>
</dbReference>
<dbReference type="PANTHER" id="PTHR10746">
    <property type="entry name" value="50S RIBOSOMAL PROTEIN L4"/>
    <property type="match status" value="1"/>
</dbReference>
<dbReference type="PANTHER" id="PTHR10746:SF6">
    <property type="entry name" value="LARGE RIBOSOMAL SUBUNIT PROTEIN UL4M"/>
    <property type="match status" value="1"/>
</dbReference>
<dbReference type="Pfam" id="PF00573">
    <property type="entry name" value="Ribosomal_L4"/>
    <property type="match status" value="1"/>
</dbReference>
<dbReference type="SUPFAM" id="SSF52166">
    <property type="entry name" value="Ribosomal protein L4"/>
    <property type="match status" value="1"/>
</dbReference>
<comment type="function">
    <text evidence="1">One of the primary rRNA binding proteins, this protein initially binds near the 5'-end of the 23S rRNA. It is important during the early stages of 50S assembly. It makes multiple contacts with different domains of the 23S rRNA in the assembled 50S subunit and ribosome.</text>
</comment>
<comment type="function">
    <text evidence="1">Forms part of the polypeptide exit tunnel.</text>
</comment>
<comment type="subunit">
    <text evidence="1">Part of the 50S ribosomal subunit.</text>
</comment>
<comment type="similarity">
    <text evidence="1">Belongs to the universal ribosomal protein uL4 family.</text>
</comment>
<proteinExistence type="inferred from homology"/>
<gene>
    <name evidence="1" type="primary">rplD</name>
    <name type="ordered locus">COXBURSA331_A0338</name>
</gene>
<reference key="1">
    <citation type="submission" date="2007-11" db="EMBL/GenBank/DDBJ databases">
        <title>Genome sequencing of phylogenetically and phenotypically diverse Coxiella burnetii isolates.</title>
        <authorList>
            <person name="Seshadri R."/>
            <person name="Samuel J.E."/>
        </authorList>
    </citation>
    <scope>NUCLEOTIDE SEQUENCE [LARGE SCALE GENOMIC DNA]</scope>
    <source>
        <strain>RSA 331 / Henzerling II</strain>
    </source>
</reference>
<name>RL4_COXBR</name>
<evidence type="ECO:0000255" key="1">
    <source>
        <dbReference type="HAMAP-Rule" id="MF_01328"/>
    </source>
</evidence>
<evidence type="ECO:0000256" key="2">
    <source>
        <dbReference type="SAM" id="MobiDB-lite"/>
    </source>
</evidence>
<evidence type="ECO:0000305" key="3"/>
<organism>
    <name type="scientific">Coxiella burnetii (strain RSA 331 / Henzerling II)</name>
    <dbReference type="NCBI Taxonomy" id="360115"/>
    <lineage>
        <taxon>Bacteria</taxon>
        <taxon>Pseudomonadati</taxon>
        <taxon>Pseudomonadota</taxon>
        <taxon>Gammaproteobacteria</taxon>
        <taxon>Legionellales</taxon>
        <taxon>Coxiellaceae</taxon>
        <taxon>Coxiella</taxon>
    </lineage>
</organism>
<sequence length="205" mass="22374">MELPVNSFDKKEASTLTVADSAFGSEYKEGLVHQVVNAYLAGGRAGTKAQKTRREVSGGGAKPWRQKGTGRARAGSSRSPLWRSGGVAFAAKPRDFTQKVNRKMYRSAMASILSELIRREQLVVVDSLKLNEPKTRELKESLKKLNLGNVLIIIDGDDRNINLASRNMVGVSVCDALHVDPVSLVAAENIVVTVDAVKRLEERLS</sequence>
<feature type="chain" id="PRO_1000086516" description="Large ribosomal subunit protein uL4">
    <location>
        <begin position="1"/>
        <end position="205"/>
    </location>
</feature>
<feature type="region of interest" description="Disordered" evidence="2">
    <location>
        <begin position="44"/>
        <end position="79"/>
    </location>
</feature>
<accession>A9NAM5</accession>
<protein>
    <recommendedName>
        <fullName evidence="1">Large ribosomal subunit protein uL4</fullName>
    </recommendedName>
    <alternativeName>
        <fullName evidence="3">50S ribosomal protein L4</fullName>
    </alternativeName>
</protein>